<accession>A4SX64</accession>
<name>ACCA_POLAQ</name>
<dbReference type="EC" id="2.1.3.15" evidence="1"/>
<dbReference type="EMBL" id="CP000655">
    <property type="protein sequence ID" value="ABP34078.1"/>
    <property type="molecule type" value="Genomic_DNA"/>
</dbReference>
<dbReference type="RefSeq" id="WP_011902703.1">
    <property type="nucleotide sequence ID" value="NC_009379.1"/>
</dbReference>
<dbReference type="SMR" id="A4SX64"/>
<dbReference type="GeneID" id="31481222"/>
<dbReference type="KEGG" id="pnu:Pnuc_0860"/>
<dbReference type="eggNOG" id="COG0825">
    <property type="taxonomic scope" value="Bacteria"/>
</dbReference>
<dbReference type="HOGENOM" id="CLU_015486_0_2_4"/>
<dbReference type="UniPathway" id="UPA00655">
    <property type="reaction ID" value="UER00711"/>
</dbReference>
<dbReference type="Proteomes" id="UP000000231">
    <property type="component" value="Chromosome"/>
</dbReference>
<dbReference type="GO" id="GO:0009317">
    <property type="term" value="C:acetyl-CoA carboxylase complex"/>
    <property type="evidence" value="ECO:0007669"/>
    <property type="project" value="InterPro"/>
</dbReference>
<dbReference type="GO" id="GO:0003989">
    <property type="term" value="F:acetyl-CoA carboxylase activity"/>
    <property type="evidence" value="ECO:0007669"/>
    <property type="project" value="InterPro"/>
</dbReference>
<dbReference type="GO" id="GO:0005524">
    <property type="term" value="F:ATP binding"/>
    <property type="evidence" value="ECO:0007669"/>
    <property type="project" value="UniProtKB-KW"/>
</dbReference>
<dbReference type="GO" id="GO:0016743">
    <property type="term" value="F:carboxyl- or carbamoyltransferase activity"/>
    <property type="evidence" value="ECO:0007669"/>
    <property type="project" value="UniProtKB-UniRule"/>
</dbReference>
<dbReference type="GO" id="GO:0006633">
    <property type="term" value="P:fatty acid biosynthetic process"/>
    <property type="evidence" value="ECO:0007669"/>
    <property type="project" value="UniProtKB-KW"/>
</dbReference>
<dbReference type="GO" id="GO:2001295">
    <property type="term" value="P:malonyl-CoA biosynthetic process"/>
    <property type="evidence" value="ECO:0007669"/>
    <property type="project" value="UniProtKB-UniRule"/>
</dbReference>
<dbReference type="Gene3D" id="3.90.226.10">
    <property type="entry name" value="2-enoyl-CoA Hydratase, Chain A, domain 1"/>
    <property type="match status" value="1"/>
</dbReference>
<dbReference type="HAMAP" id="MF_00823">
    <property type="entry name" value="AcetylCoA_CT_alpha"/>
    <property type="match status" value="1"/>
</dbReference>
<dbReference type="InterPro" id="IPR001095">
    <property type="entry name" value="Acetyl_CoA_COase_a_su"/>
</dbReference>
<dbReference type="InterPro" id="IPR029045">
    <property type="entry name" value="ClpP/crotonase-like_dom_sf"/>
</dbReference>
<dbReference type="InterPro" id="IPR011763">
    <property type="entry name" value="COA_CT_C"/>
</dbReference>
<dbReference type="NCBIfam" id="TIGR00513">
    <property type="entry name" value="accA"/>
    <property type="match status" value="1"/>
</dbReference>
<dbReference type="NCBIfam" id="NF041504">
    <property type="entry name" value="AccA_sub"/>
    <property type="match status" value="1"/>
</dbReference>
<dbReference type="NCBIfam" id="NF004344">
    <property type="entry name" value="PRK05724.1"/>
    <property type="match status" value="1"/>
</dbReference>
<dbReference type="PANTHER" id="PTHR42853">
    <property type="entry name" value="ACETYL-COENZYME A CARBOXYLASE CARBOXYL TRANSFERASE SUBUNIT ALPHA"/>
    <property type="match status" value="1"/>
</dbReference>
<dbReference type="PANTHER" id="PTHR42853:SF3">
    <property type="entry name" value="ACETYL-COENZYME A CARBOXYLASE CARBOXYL TRANSFERASE SUBUNIT ALPHA, CHLOROPLASTIC"/>
    <property type="match status" value="1"/>
</dbReference>
<dbReference type="Pfam" id="PF03255">
    <property type="entry name" value="ACCA"/>
    <property type="match status" value="1"/>
</dbReference>
<dbReference type="PRINTS" id="PR01069">
    <property type="entry name" value="ACCCTRFRASEA"/>
</dbReference>
<dbReference type="SUPFAM" id="SSF52096">
    <property type="entry name" value="ClpP/crotonase"/>
    <property type="match status" value="1"/>
</dbReference>
<dbReference type="PROSITE" id="PS50989">
    <property type="entry name" value="COA_CT_CTER"/>
    <property type="match status" value="1"/>
</dbReference>
<comment type="function">
    <text evidence="1">Component of the acetyl coenzyme A carboxylase (ACC) complex. First, biotin carboxylase catalyzes the carboxylation of biotin on its carrier protein (BCCP) and then the CO(2) group is transferred by the carboxyltransferase to acetyl-CoA to form malonyl-CoA.</text>
</comment>
<comment type="catalytic activity">
    <reaction evidence="1">
        <text>N(6)-carboxybiotinyl-L-lysyl-[protein] + acetyl-CoA = N(6)-biotinyl-L-lysyl-[protein] + malonyl-CoA</text>
        <dbReference type="Rhea" id="RHEA:54728"/>
        <dbReference type="Rhea" id="RHEA-COMP:10505"/>
        <dbReference type="Rhea" id="RHEA-COMP:10506"/>
        <dbReference type="ChEBI" id="CHEBI:57288"/>
        <dbReference type="ChEBI" id="CHEBI:57384"/>
        <dbReference type="ChEBI" id="CHEBI:83144"/>
        <dbReference type="ChEBI" id="CHEBI:83145"/>
        <dbReference type="EC" id="2.1.3.15"/>
    </reaction>
</comment>
<comment type="pathway">
    <text evidence="1">Lipid metabolism; malonyl-CoA biosynthesis; malonyl-CoA from acetyl-CoA: step 1/1.</text>
</comment>
<comment type="subunit">
    <text evidence="1">Acetyl-CoA carboxylase is a heterohexamer composed of biotin carboxyl carrier protein (AccB), biotin carboxylase (AccC) and two subunits each of ACCase subunit alpha (AccA) and ACCase subunit beta (AccD).</text>
</comment>
<comment type="subcellular location">
    <subcellularLocation>
        <location evidence="1">Cytoplasm</location>
    </subcellularLocation>
</comment>
<comment type="similarity">
    <text evidence="1">Belongs to the AccA family.</text>
</comment>
<protein>
    <recommendedName>
        <fullName evidence="1">Acetyl-coenzyme A carboxylase carboxyl transferase subunit alpha</fullName>
        <shortName evidence="1">ACCase subunit alpha</shortName>
        <shortName evidence="1">Acetyl-CoA carboxylase carboxyltransferase subunit alpha</shortName>
        <ecNumber evidence="1">2.1.3.15</ecNumber>
    </recommendedName>
</protein>
<sequence length="323" mass="35960">MKTTFLDFEQQIAELESKIEELRFVQDESSVDISDEIKTLSEKSLQLTKDIYANLTPWQVSQVARHPQRPYTLDYVGGLFTDFHELHGDRTFADDQSIIGGLARFDSQPCMVIGHQKGRDTKERALRNFGMSRPEGYRKAMRLMRLAEKFSIPVFTFVDTPGAFPGIDAEERNQSEAIGRNLYVQAELTVPIIATIIGEGGSGGALAIAMGDVVLMLQNSTYSVISPEGCASILWKTADKASEAAEQLGLTAQRIKALGLIDKIVAEPIGGAHRDYDVMMANMRKALSDSLKTFDGMKEDALLERRHERLMSYGKFKEITVKA</sequence>
<feature type="chain" id="PRO_1000083932" description="Acetyl-coenzyme A carboxylase carboxyl transferase subunit alpha">
    <location>
        <begin position="1"/>
        <end position="323"/>
    </location>
</feature>
<feature type="domain" description="CoA carboxyltransferase C-terminal" evidence="2">
    <location>
        <begin position="40"/>
        <end position="293"/>
    </location>
</feature>
<organism>
    <name type="scientific">Polynucleobacter asymbioticus (strain DSM 18221 / CIP 109841 / QLW-P1DMWA-1)</name>
    <name type="common">Polynucleobacter necessarius subsp. asymbioticus</name>
    <dbReference type="NCBI Taxonomy" id="312153"/>
    <lineage>
        <taxon>Bacteria</taxon>
        <taxon>Pseudomonadati</taxon>
        <taxon>Pseudomonadota</taxon>
        <taxon>Betaproteobacteria</taxon>
        <taxon>Burkholderiales</taxon>
        <taxon>Burkholderiaceae</taxon>
        <taxon>Polynucleobacter</taxon>
    </lineage>
</organism>
<proteinExistence type="inferred from homology"/>
<evidence type="ECO:0000255" key="1">
    <source>
        <dbReference type="HAMAP-Rule" id="MF_00823"/>
    </source>
</evidence>
<evidence type="ECO:0000255" key="2">
    <source>
        <dbReference type="PROSITE-ProRule" id="PRU01137"/>
    </source>
</evidence>
<keyword id="KW-0067">ATP-binding</keyword>
<keyword id="KW-0963">Cytoplasm</keyword>
<keyword id="KW-0275">Fatty acid biosynthesis</keyword>
<keyword id="KW-0276">Fatty acid metabolism</keyword>
<keyword id="KW-0444">Lipid biosynthesis</keyword>
<keyword id="KW-0443">Lipid metabolism</keyword>
<keyword id="KW-0547">Nucleotide-binding</keyword>
<keyword id="KW-1185">Reference proteome</keyword>
<keyword id="KW-0808">Transferase</keyword>
<gene>
    <name evidence="1" type="primary">accA</name>
    <name type="ordered locus">Pnuc_0860</name>
</gene>
<reference key="1">
    <citation type="journal article" date="2012" name="Stand. Genomic Sci.">
        <title>Complete genome sequence of Polynucleobacter necessarius subsp. asymbioticus type strain (QLW-P1DMWA-1(T)).</title>
        <authorList>
            <person name="Meincke L."/>
            <person name="Copeland A."/>
            <person name="Lapidus A."/>
            <person name="Lucas S."/>
            <person name="Berry K.W."/>
            <person name="Del Rio T.G."/>
            <person name="Hammon N."/>
            <person name="Dalin E."/>
            <person name="Tice H."/>
            <person name="Pitluck S."/>
            <person name="Richardson P."/>
            <person name="Bruce D."/>
            <person name="Goodwin L."/>
            <person name="Han C."/>
            <person name="Tapia R."/>
            <person name="Detter J.C."/>
            <person name="Schmutz J."/>
            <person name="Brettin T."/>
            <person name="Larimer F."/>
            <person name="Land M."/>
            <person name="Hauser L."/>
            <person name="Kyrpides N.C."/>
            <person name="Ivanova N."/>
            <person name="Goker M."/>
            <person name="Woyke T."/>
            <person name="Wu Q.L."/>
            <person name="Pockl M."/>
            <person name="Hahn M.W."/>
            <person name="Klenk H.P."/>
        </authorList>
    </citation>
    <scope>NUCLEOTIDE SEQUENCE [LARGE SCALE GENOMIC DNA]</scope>
    <source>
        <strain>DSM 18221 / CIP 109841 / QLW-P1DMWA-1</strain>
    </source>
</reference>